<feature type="chain" id="PRO_0000082354" description="Taste receptor type 2 member 60">
    <location>
        <begin position="1"/>
        <end position="318"/>
    </location>
</feature>
<feature type="topological domain" description="Extracellular" evidence="2">
    <location>
        <begin position="1"/>
        <end position="7"/>
    </location>
</feature>
<feature type="transmembrane region" description="Helical; Name=1" evidence="2">
    <location>
        <begin position="8"/>
        <end position="28"/>
    </location>
</feature>
<feature type="topological domain" description="Cytoplasmic" evidence="2">
    <location>
        <begin position="29"/>
        <end position="40"/>
    </location>
</feature>
<feature type="transmembrane region" description="Helical; Name=2" evidence="2">
    <location>
        <begin position="41"/>
        <end position="61"/>
    </location>
</feature>
<feature type="topological domain" description="Extracellular" evidence="2">
    <location>
        <begin position="62"/>
        <end position="88"/>
    </location>
</feature>
<feature type="transmembrane region" description="Helical; Name=3" evidence="2">
    <location>
        <begin position="89"/>
        <end position="109"/>
    </location>
</feature>
<feature type="topological domain" description="Cytoplasmic" evidence="2">
    <location>
        <begin position="110"/>
        <end position="128"/>
    </location>
</feature>
<feature type="transmembrane region" description="Helical; Name=4" evidence="2">
    <location>
        <begin position="129"/>
        <end position="149"/>
    </location>
</feature>
<feature type="topological domain" description="Extracellular" evidence="2">
    <location>
        <begin position="150"/>
        <end position="183"/>
    </location>
</feature>
<feature type="transmembrane region" description="Helical; Name=5" evidence="2">
    <location>
        <begin position="184"/>
        <end position="204"/>
    </location>
</feature>
<feature type="topological domain" description="Cytoplasmic" evidence="2">
    <location>
        <begin position="205"/>
        <end position="234"/>
    </location>
</feature>
<feature type="transmembrane region" description="Helical; Name=6" evidence="2">
    <location>
        <begin position="235"/>
        <end position="255"/>
    </location>
</feature>
<feature type="topological domain" description="Extracellular" evidence="2">
    <location>
        <begin position="256"/>
        <end position="264"/>
    </location>
</feature>
<feature type="transmembrane region" description="Helical; Name=7" evidence="2">
    <location>
        <begin position="265"/>
        <end position="285"/>
    </location>
</feature>
<feature type="topological domain" description="Cytoplasmic" evidence="2">
    <location>
        <begin position="286"/>
        <end position="318"/>
    </location>
</feature>
<feature type="glycosylation site" description="N-linked (GlcNAc...) asparagine" evidence="2">
    <location>
        <position position="179"/>
    </location>
</feature>
<name>T2R60_PANTR</name>
<organism>
    <name type="scientific">Pan troglodytes</name>
    <name type="common">Chimpanzee</name>
    <dbReference type="NCBI Taxonomy" id="9598"/>
    <lineage>
        <taxon>Eukaryota</taxon>
        <taxon>Metazoa</taxon>
        <taxon>Chordata</taxon>
        <taxon>Craniata</taxon>
        <taxon>Vertebrata</taxon>
        <taxon>Euteleostomi</taxon>
        <taxon>Mammalia</taxon>
        <taxon>Eutheria</taxon>
        <taxon>Euarchontoglires</taxon>
        <taxon>Primates</taxon>
        <taxon>Haplorrhini</taxon>
        <taxon>Catarrhini</taxon>
        <taxon>Hominidae</taxon>
        <taxon>Pan</taxon>
    </lineage>
</organism>
<proteinExistence type="inferred from homology"/>
<accession>Q646A5</accession>
<dbReference type="EMBL" id="AY724901">
    <property type="protein sequence ID" value="AAU21114.1"/>
    <property type="molecule type" value="Genomic_DNA"/>
</dbReference>
<dbReference type="RefSeq" id="NP_001009140.1">
    <property type="nucleotide sequence ID" value="NM_001009140.1"/>
</dbReference>
<dbReference type="RefSeq" id="XP_016800913.1">
    <property type="nucleotide sequence ID" value="XM_016945424.1"/>
</dbReference>
<dbReference type="SMR" id="Q646A5"/>
<dbReference type="FunCoup" id="Q646A5">
    <property type="interactions" value="214"/>
</dbReference>
<dbReference type="STRING" id="9598.ENSPTRP00000033935"/>
<dbReference type="GlyCosmos" id="Q646A5">
    <property type="glycosylation" value="1 site, No reported glycans"/>
</dbReference>
<dbReference type="PaxDb" id="9598-ENSPTRP00000033935"/>
<dbReference type="Ensembl" id="ENSPTRT00000036697.3">
    <property type="protein sequence ID" value="ENSPTRP00000033935.2"/>
    <property type="gene ID" value="ENSPTRG00000019812.6"/>
</dbReference>
<dbReference type="Ensembl" id="ENSPTRT00000106268.1">
    <property type="protein sequence ID" value="ENSPTRP00000071296.1"/>
    <property type="gene ID" value="ENSPTRG00000045590.1"/>
</dbReference>
<dbReference type="GeneID" id="493890"/>
<dbReference type="KEGG" id="ptr:493890"/>
<dbReference type="CTD" id="338398"/>
<dbReference type="VGNC" id="VGNC:8777">
    <property type="gene designation" value="TAS2R60"/>
</dbReference>
<dbReference type="eggNOG" id="ENOG502S2SI">
    <property type="taxonomic scope" value="Eukaryota"/>
</dbReference>
<dbReference type="GeneTree" id="ENSGT01100000263477"/>
<dbReference type="HOGENOM" id="CLU_072337_1_1_1"/>
<dbReference type="InParanoid" id="Q646A5"/>
<dbReference type="OMA" id="CLQWVVI"/>
<dbReference type="OrthoDB" id="10991at9604"/>
<dbReference type="TreeFam" id="TF335891"/>
<dbReference type="Proteomes" id="UP000002277">
    <property type="component" value="Chromosome 7"/>
</dbReference>
<dbReference type="GO" id="GO:0016020">
    <property type="term" value="C:membrane"/>
    <property type="evidence" value="ECO:0000318"/>
    <property type="project" value="GO_Central"/>
</dbReference>
<dbReference type="GO" id="GO:0005886">
    <property type="term" value="C:plasma membrane"/>
    <property type="evidence" value="ECO:0007669"/>
    <property type="project" value="UniProtKB-ARBA"/>
</dbReference>
<dbReference type="GO" id="GO:0033038">
    <property type="term" value="F:bitter taste receptor activity"/>
    <property type="evidence" value="ECO:0007669"/>
    <property type="project" value="InterPro"/>
</dbReference>
<dbReference type="GO" id="GO:0004930">
    <property type="term" value="F:G protein-coupled receptor activity"/>
    <property type="evidence" value="ECO:0007669"/>
    <property type="project" value="UniProtKB-KW"/>
</dbReference>
<dbReference type="CDD" id="cd15018">
    <property type="entry name" value="7tm_TAS2R41-like"/>
    <property type="match status" value="1"/>
</dbReference>
<dbReference type="FunFam" id="1.20.1070.10:FF:000055">
    <property type="entry name" value="Taste receptor type 2"/>
    <property type="match status" value="1"/>
</dbReference>
<dbReference type="Gene3D" id="1.20.1070.10">
    <property type="entry name" value="Rhodopsin 7-helix transmembrane proteins"/>
    <property type="match status" value="1"/>
</dbReference>
<dbReference type="InterPro" id="IPR007960">
    <property type="entry name" value="TAS2R"/>
</dbReference>
<dbReference type="PANTHER" id="PTHR11394">
    <property type="entry name" value="TASTE RECEPTOR TYPE 2"/>
    <property type="match status" value="1"/>
</dbReference>
<dbReference type="PANTHER" id="PTHR11394:SF32">
    <property type="entry name" value="TASTE RECEPTOR TYPE 2 MEMBER 60"/>
    <property type="match status" value="1"/>
</dbReference>
<dbReference type="Pfam" id="PF05296">
    <property type="entry name" value="TAS2R"/>
    <property type="match status" value="1"/>
</dbReference>
<dbReference type="SUPFAM" id="SSF81321">
    <property type="entry name" value="Family A G protein-coupled receptor-like"/>
    <property type="match status" value="1"/>
</dbReference>
<sequence>MNGDHMVLGSSVTDKKAIILVTILLLLRLVAIAGNGFITAALGVEWVLRRMLLPCDKLLVSLGASHFCLQSVVMGKTIYVFLYPMAFPYNPVLQFLAFQWDFLNAATLWFSTWLSVFYCVKIATFTHPVFFWLKHKLSGWLPWMVFSYVGLSSFTTILFFIGNHRMYQNYLKNHLQPWNVTGNSIRSYCEKFYLFPLKMITWTMPTAVFFICMILLITSLGRHMKKALLTTSGFREPSVQAHIKALLALLSFAMLFISYFLSLVFSAAGIFPPLDFKFWVWESVIYLCAAVHPIILLFSNCRLRAVLKSRRSSRCGTP</sequence>
<gene>
    <name type="primary">TAS2R60</name>
</gene>
<evidence type="ECO:0000250" key="1"/>
<evidence type="ECO:0000255" key="2"/>
<evidence type="ECO:0000305" key="3"/>
<protein>
    <recommendedName>
        <fullName>Taste receptor type 2 member 60</fullName>
        <shortName>T2R60</shortName>
    </recommendedName>
    <alternativeName>
        <fullName>T2R56</fullName>
    </alternativeName>
</protein>
<keyword id="KW-0297">G-protein coupled receptor</keyword>
<keyword id="KW-0325">Glycoprotein</keyword>
<keyword id="KW-0472">Membrane</keyword>
<keyword id="KW-0675">Receptor</keyword>
<keyword id="KW-1185">Reference proteome</keyword>
<keyword id="KW-0716">Sensory transduction</keyword>
<keyword id="KW-0919">Taste</keyword>
<keyword id="KW-0807">Transducer</keyword>
<keyword id="KW-0812">Transmembrane</keyword>
<keyword id="KW-1133">Transmembrane helix</keyword>
<reference key="1">
    <citation type="journal article" date="2005" name="Mol. Biol. Evol.">
        <title>Evolution of bitter taste receptors in humans and apes.</title>
        <authorList>
            <person name="Fischer A."/>
            <person name="Gilad Y."/>
            <person name="Man O."/>
            <person name="Paeaebo S."/>
        </authorList>
    </citation>
    <scope>NUCLEOTIDE SEQUENCE [GENOMIC DNA]</scope>
</reference>
<comment type="function">
    <text evidence="1">Receptor that may play a role in the perception of bitterness and is gustducin-linked. May play a role in sensing the chemical composition of the gastrointestinal content. The activity of this receptor may stimulate alpha gustducin, mediate PLC-beta-2 activation and lead to the gating of TRPM5 (By similarity).</text>
</comment>
<comment type="subcellular location">
    <subcellularLocation>
        <location>Membrane</location>
        <topology>Multi-pass membrane protein</topology>
    </subcellularLocation>
</comment>
<comment type="miscellaneous">
    <text>Most taste cells may be activated by a limited number of bitter compounds; individual taste cells can discriminate among bitter stimuli.</text>
</comment>
<comment type="similarity">
    <text evidence="3">Belongs to the G-protein coupled receptor T2R family.</text>
</comment>